<reference key="1">
    <citation type="journal article" date="2009" name="PLoS Genet.">
        <title>Organised genome dynamics in the Escherichia coli species results in highly diverse adaptive paths.</title>
        <authorList>
            <person name="Touchon M."/>
            <person name="Hoede C."/>
            <person name="Tenaillon O."/>
            <person name="Barbe V."/>
            <person name="Baeriswyl S."/>
            <person name="Bidet P."/>
            <person name="Bingen E."/>
            <person name="Bonacorsi S."/>
            <person name="Bouchier C."/>
            <person name="Bouvet O."/>
            <person name="Calteau A."/>
            <person name="Chiapello H."/>
            <person name="Clermont O."/>
            <person name="Cruveiller S."/>
            <person name="Danchin A."/>
            <person name="Diard M."/>
            <person name="Dossat C."/>
            <person name="Karoui M.E."/>
            <person name="Frapy E."/>
            <person name="Garry L."/>
            <person name="Ghigo J.M."/>
            <person name="Gilles A.M."/>
            <person name="Johnson J."/>
            <person name="Le Bouguenec C."/>
            <person name="Lescat M."/>
            <person name="Mangenot S."/>
            <person name="Martinez-Jehanne V."/>
            <person name="Matic I."/>
            <person name="Nassif X."/>
            <person name="Oztas S."/>
            <person name="Petit M.A."/>
            <person name="Pichon C."/>
            <person name="Rouy Z."/>
            <person name="Ruf C.S."/>
            <person name="Schneider D."/>
            <person name="Tourret J."/>
            <person name="Vacherie B."/>
            <person name="Vallenet D."/>
            <person name="Medigue C."/>
            <person name="Rocha E.P.C."/>
            <person name="Denamur E."/>
        </authorList>
    </citation>
    <scope>NUCLEOTIDE SEQUENCE [LARGE SCALE GENOMIC DNA]</scope>
    <source>
        <strain>UMN026 / ExPEC</strain>
    </source>
</reference>
<proteinExistence type="inferred from homology"/>
<organism>
    <name type="scientific">Escherichia coli O17:K52:H18 (strain UMN026 / ExPEC)</name>
    <dbReference type="NCBI Taxonomy" id="585056"/>
    <lineage>
        <taxon>Bacteria</taxon>
        <taxon>Pseudomonadati</taxon>
        <taxon>Pseudomonadota</taxon>
        <taxon>Gammaproteobacteria</taxon>
        <taxon>Enterobacterales</taxon>
        <taxon>Enterobacteriaceae</taxon>
        <taxon>Escherichia</taxon>
    </lineage>
</organism>
<keyword id="KW-0997">Cell inner membrane</keyword>
<keyword id="KW-1003">Cell membrane</keyword>
<keyword id="KW-0378">Hydrolase</keyword>
<keyword id="KW-0441">Lipid A biosynthesis</keyword>
<keyword id="KW-0444">Lipid biosynthesis</keyword>
<keyword id="KW-0443">Lipid metabolism</keyword>
<keyword id="KW-0464">Manganese</keyword>
<keyword id="KW-0472">Membrane</keyword>
<keyword id="KW-0479">Metal-binding</keyword>
<dbReference type="EC" id="3.6.1.54" evidence="1"/>
<dbReference type="EMBL" id="CU928163">
    <property type="protein sequence ID" value="CAR11779.1"/>
    <property type="molecule type" value="Genomic_DNA"/>
</dbReference>
<dbReference type="RefSeq" id="WP_000212237.1">
    <property type="nucleotide sequence ID" value="NC_011751.1"/>
</dbReference>
<dbReference type="RefSeq" id="YP_002411327.1">
    <property type="nucleotide sequence ID" value="NC_011751.1"/>
</dbReference>
<dbReference type="SMR" id="B7N978"/>
<dbReference type="STRING" id="585056.ECUMN_0564"/>
<dbReference type="KEGG" id="eum:ECUMN_0564"/>
<dbReference type="PATRIC" id="fig|585056.7.peg.772"/>
<dbReference type="HOGENOM" id="CLU_074586_0_0_6"/>
<dbReference type="UniPathway" id="UPA00359">
    <property type="reaction ID" value="UER00480"/>
</dbReference>
<dbReference type="Proteomes" id="UP000007097">
    <property type="component" value="Chromosome"/>
</dbReference>
<dbReference type="GO" id="GO:0005737">
    <property type="term" value="C:cytoplasm"/>
    <property type="evidence" value="ECO:0007669"/>
    <property type="project" value="InterPro"/>
</dbReference>
<dbReference type="GO" id="GO:0019897">
    <property type="term" value="C:extrinsic component of plasma membrane"/>
    <property type="evidence" value="ECO:0007669"/>
    <property type="project" value="UniProtKB-UniRule"/>
</dbReference>
<dbReference type="GO" id="GO:0030145">
    <property type="term" value="F:manganese ion binding"/>
    <property type="evidence" value="ECO:0007669"/>
    <property type="project" value="UniProtKB-UniRule"/>
</dbReference>
<dbReference type="GO" id="GO:0008758">
    <property type="term" value="F:UDP-2,3-diacylglucosamine hydrolase activity"/>
    <property type="evidence" value="ECO:0007669"/>
    <property type="project" value="UniProtKB-UniRule"/>
</dbReference>
<dbReference type="GO" id="GO:0009245">
    <property type="term" value="P:lipid A biosynthetic process"/>
    <property type="evidence" value="ECO:0007669"/>
    <property type="project" value="UniProtKB-UniRule"/>
</dbReference>
<dbReference type="CDD" id="cd07398">
    <property type="entry name" value="MPP_YbbF-LpxH"/>
    <property type="match status" value="1"/>
</dbReference>
<dbReference type="FunFam" id="3.60.21.10:FF:000012">
    <property type="entry name" value="UDP-2,3-diacylglucosamine hydrolase"/>
    <property type="match status" value="1"/>
</dbReference>
<dbReference type="Gene3D" id="3.60.21.10">
    <property type="match status" value="1"/>
</dbReference>
<dbReference type="HAMAP" id="MF_00575">
    <property type="entry name" value="LpxH"/>
    <property type="match status" value="1"/>
</dbReference>
<dbReference type="InterPro" id="IPR004843">
    <property type="entry name" value="Calcineurin-like_PHP_ApaH"/>
</dbReference>
<dbReference type="InterPro" id="IPR043461">
    <property type="entry name" value="LpxH-like"/>
</dbReference>
<dbReference type="InterPro" id="IPR029052">
    <property type="entry name" value="Metallo-depent_PP-like"/>
</dbReference>
<dbReference type="InterPro" id="IPR010138">
    <property type="entry name" value="UDP-diacylglucosamine_Hdrlase"/>
</dbReference>
<dbReference type="NCBIfam" id="TIGR01854">
    <property type="entry name" value="lipid_A_lpxH"/>
    <property type="match status" value="1"/>
</dbReference>
<dbReference type="NCBIfam" id="NF003743">
    <property type="entry name" value="PRK05340.1"/>
    <property type="match status" value="1"/>
</dbReference>
<dbReference type="PANTHER" id="PTHR34990:SF1">
    <property type="entry name" value="UDP-2,3-DIACYLGLUCOSAMINE HYDROLASE"/>
    <property type="match status" value="1"/>
</dbReference>
<dbReference type="PANTHER" id="PTHR34990">
    <property type="entry name" value="UDP-2,3-DIACYLGLUCOSAMINE HYDROLASE-RELATED"/>
    <property type="match status" value="1"/>
</dbReference>
<dbReference type="Pfam" id="PF00149">
    <property type="entry name" value="Metallophos"/>
    <property type="match status" value="1"/>
</dbReference>
<dbReference type="SUPFAM" id="SSF56300">
    <property type="entry name" value="Metallo-dependent phosphatases"/>
    <property type="match status" value="1"/>
</dbReference>
<sequence length="240" mass="26866">MATLFIADLHLCAEEPAITAGFLRFLAGEARKADALYILGDLFEAWIGDDDPNPLHRQMAAAIKAVSDSGVPCYFIHGNRDFLLGKRFARESGMTLLPEEKVLELYGRRVLIMHGDTLCTDDAGYQAFRAKVHKPWLQTLFLALPLFVRKRIAARMRANSKEANSSKSLAIMDVNQNAVVSAMEKHQVQWLIHGHTHRPAVHELIANQQPAFRVVLGAWHTEGSMVKVTADDVELIHFPF</sequence>
<comment type="function">
    <text evidence="1">Hydrolyzes the pyrophosphate bond of UDP-2,3-diacylglucosamine to yield 2,3-diacylglucosamine 1-phosphate (lipid X) and UMP by catalyzing the attack of water at the alpha-P atom. Involved in the biosynthesis of lipid A, a phosphorylated glycolipid that anchors the lipopolysaccharide to the outer membrane of the cell.</text>
</comment>
<comment type="catalytic activity">
    <reaction evidence="1">
        <text>UDP-2-N,3-O-bis[(3R)-3-hydroxytetradecanoyl]-alpha-D-glucosamine + H2O = 2-N,3-O-bis[(3R)-3-hydroxytetradecanoyl]-alpha-D-glucosaminyl 1-phosphate + UMP + 2 H(+)</text>
        <dbReference type="Rhea" id="RHEA:25213"/>
        <dbReference type="ChEBI" id="CHEBI:15377"/>
        <dbReference type="ChEBI" id="CHEBI:15378"/>
        <dbReference type="ChEBI" id="CHEBI:57865"/>
        <dbReference type="ChEBI" id="CHEBI:57957"/>
        <dbReference type="ChEBI" id="CHEBI:78847"/>
        <dbReference type="EC" id="3.6.1.54"/>
    </reaction>
</comment>
<comment type="cofactor">
    <cofactor evidence="1">
        <name>Mn(2+)</name>
        <dbReference type="ChEBI" id="CHEBI:29035"/>
    </cofactor>
    <text evidence="1">Binds 2 Mn(2+) ions per subunit in a binuclear metal center.</text>
</comment>
<comment type="pathway">
    <text evidence="1">Glycolipid biosynthesis; lipid IV(A) biosynthesis; lipid IV(A) from (3R)-3-hydroxytetradecanoyl-[acyl-carrier-protein] and UDP-N-acetyl-alpha-D-glucosamine: step 4/6.</text>
</comment>
<comment type="subcellular location">
    <subcellularLocation>
        <location evidence="1">Cell inner membrane</location>
        <topology evidence="1">Peripheral membrane protein</topology>
        <orientation evidence="1">Cytoplasmic side</orientation>
    </subcellularLocation>
</comment>
<comment type="similarity">
    <text evidence="1">Belongs to the LpxH family.</text>
</comment>
<protein>
    <recommendedName>
        <fullName evidence="1">UDP-2,3-diacylglucosamine hydrolase</fullName>
        <ecNumber evidence="1">3.6.1.54</ecNumber>
    </recommendedName>
    <alternativeName>
        <fullName evidence="1">UDP-2,3-diacylglucosamine diphosphatase</fullName>
    </alternativeName>
</protein>
<gene>
    <name evidence="1" type="primary">lpxH</name>
    <name type="ordered locus">ECUMN_0564</name>
</gene>
<name>LPXH_ECOLU</name>
<evidence type="ECO:0000255" key="1">
    <source>
        <dbReference type="HAMAP-Rule" id="MF_00575"/>
    </source>
</evidence>
<feature type="chain" id="PRO_1000129522" description="UDP-2,3-diacylglucosamine hydrolase">
    <location>
        <begin position="1"/>
        <end position="240"/>
    </location>
</feature>
<feature type="binding site" evidence="1">
    <location>
        <position position="8"/>
    </location>
    <ligand>
        <name>Mn(2+)</name>
        <dbReference type="ChEBI" id="CHEBI:29035"/>
        <label>1</label>
    </ligand>
</feature>
<feature type="binding site" evidence="1">
    <location>
        <position position="10"/>
    </location>
    <ligand>
        <name>Mn(2+)</name>
        <dbReference type="ChEBI" id="CHEBI:29035"/>
        <label>1</label>
    </ligand>
</feature>
<feature type="binding site" evidence="1">
    <location>
        <position position="41"/>
    </location>
    <ligand>
        <name>Mn(2+)</name>
        <dbReference type="ChEBI" id="CHEBI:29035"/>
        <label>1</label>
    </ligand>
</feature>
<feature type="binding site" evidence="1">
    <location>
        <position position="41"/>
    </location>
    <ligand>
        <name>Mn(2+)</name>
        <dbReference type="ChEBI" id="CHEBI:29035"/>
        <label>2</label>
    </ligand>
</feature>
<feature type="binding site" evidence="1">
    <location>
        <begin position="79"/>
        <end position="80"/>
    </location>
    <ligand>
        <name>substrate</name>
    </ligand>
</feature>
<feature type="binding site" evidence="1">
    <location>
        <position position="79"/>
    </location>
    <ligand>
        <name>Mn(2+)</name>
        <dbReference type="ChEBI" id="CHEBI:29035"/>
        <label>2</label>
    </ligand>
</feature>
<feature type="binding site" evidence="1">
    <location>
        <position position="114"/>
    </location>
    <ligand>
        <name>Mn(2+)</name>
        <dbReference type="ChEBI" id="CHEBI:29035"/>
        <label>2</label>
    </ligand>
</feature>
<feature type="binding site" evidence="1">
    <location>
        <position position="122"/>
    </location>
    <ligand>
        <name>substrate</name>
    </ligand>
</feature>
<feature type="binding site" evidence="1">
    <location>
        <position position="160"/>
    </location>
    <ligand>
        <name>substrate</name>
    </ligand>
</feature>
<feature type="binding site" evidence="1">
    <location>
        <position position="164"/>
    </location>
    <ligand>
        <name>substrate</name>
    </ligand>
</feature>
<feature type="binding site" evidence="1">
    <location>
        <position position="167"/>
    </location>
    <ligand>
        <name>substrate</name>
    </ligand>
</feature>
<feature type="binding site" evidence="1">
    <location>
        <position position="195"/>
    </location>
    <ligand>
        <name>Mn(2+)</name>
        <dbReference type="ChEBI" id="CHEBI:29035"/>
        <label>2</label>
    </ligand>
</feature>
<feature type="binding site" evidence="1">
    <location>
        <position position="195"/>
    </location>
    <ligand>
        <name>substrate</name>
    </ligand>
</feature>
<feature type="binding site" evidence="1">
    <location>
        <position position="197"/>
    </location>
    <ligand>
        <name>Mn(2+)</name>
        <dbReference type="ChEBI" id="CHEBI:29035"/>
        <label>1</label>
    </ligand>
</feature>
<accession>B7N978</accession>